<accession>Q177G4</accession>
<keyword id="KW-0608">Pigment</keyword>
<keyword id="KW-1185">Reference proteome</keyword>
<keyword id="KW-0716">Sensory transduction</keyword>
<keyword id="KW-0844">Vision</keyword>
<dbReference type="EMBL" id="CH477376">
    <property type="protein sequence ID" value="EAT42313.1"/>
    <property type="molecule type" value="Genomic_DNA"/>
</dbReference>
<dbReference type="RefSeq" id="XP_001657527.1">
    <property type="nucleotide sequence ID" value="XM_001657477.1"/>
</dbReference>
<dbReference type="FunCoup" id="Q177G4">
    <property type="interactions" value="5"/>
</dbReference>
<dbReference type="STRING" id="7159.Q177G4"/>
<dbReference type="PaxDb" id="7159-AAEL006142-PA"/>
<dbReference type="GeneID" id="5567532"/>
<dbReference type="KEGG" id="aag:5567532"/>
<dbReference type="CTD" id="119585041"/>
<dbReference type="VEuPathDB" id="VectorBase:AAEL006142"/>
<dbReference type="eggNOG" id="KOG3621">
    <property type="taxonomic scope" value="Eukaryota"/>
</dbReference>
<dbReference type="HOGENOM" id="CLU_302332_0_0_1"/>
<dbReference type="InParanoid" id="Q177G4"/>
<dbReference type="OMA" id="WARCFEQ"/>
<dbReference type="OrthoDB" id="19493at2759"/>
<dbReference type="PhylomeDB" id="Q177G4"/>
<dbReference type="Proteomes" id="UP000008820">
    <property type="component" value="Unassembled WGS sequence"/>
</dbReference>
<dbReference type="Proteomes" id="UP000682892">
    <property type="component" value="Unassembled WGS sequence"/>
</dbReference>
<dbReference type="GO" id="GO:0005737">
    <property type="term" value="C:cytoplasm"/>
    <property type="evidence" value="ECO:0007669"/>
    <property type="project" value="TreeGrafter"/>
</dbReference>
<dbReference type="GO" id="GO:0031409">
    <property type="term" value="F:pigment binding"/>
    <property type="evidence" value="ECO:0007669"/>
    <property type="project" value="UniProtKB-KW"/>
</dbReference>
<dbReference type="GO" id="GO:0006726">
    <property type="term" value="P:eye pigment biosynthetic process"/>
    <property type="evidence" value="ECO:0000250"/>
    <property type="project" value="UniProtKB"/>
</dbReference>
<dbReference type="GO" id="GO:0006622">
    <property type="term" value="P:protein targeting to lysosome"/>
    <property type="evidence" value="ECO:0000250"/>
    <property type="project" value="UniProtKB"/>
</dbReference>
<dbReference type="GO" id="GO:0007601">
    <property type="term" value="P:visual perception"/>
    <property type="evidence" value="ECO:0007669"/>
    <property type="project" value="UniProtKB-KW"/>
</dbReference>
<dbReference type="FunFam" id="2.130.10.10:FF:000968">
    <property type="entry name" value="Hermansky-Pudlak syndrome 5 protein homolog"/>
    <property type="match status" value="1"/>
</dbReference>
<dbReference type="Gene3D" id="2.130.10.10">
    <property type="entry name" value="YVTN repeat-like/Quinoprotein amine dehydrogenase"/>
    <property type="match status" value="1"/>
</dbReference>
<dbReference type="InterPro" id="IPR056499">
    <property type="entry name" value="Beta-prop_HPS5-like"/>
</dbReference>
<dbReference type="InterPro" id="IPR035431">
    <property type="entry name" value="HPS5"/>
</dbReference>
<dbReference type="InterPro" id="IPR056446">
    <property type="entry name" value="TPR_HPS5_insects"/>
</dbReference>
<dbReference type="InterPro" id="IPR015943">
    <property type="entry name" value="WD40/YVTN_repeat-like_dom_sf"/>
</dbReference>
<dbReference type="PANTHER" id="PTHR23287:SF18">
    <property type="entry name" value="BLOC-2 COMPLEX MEMBER HPS5"/>
    <property type="match status" value="1"/>
</dbReference>
<dbReference type="PANTHER" id="PTHR23287">
    <property type="entry name" value="RUBY-EYE2-LIKE PROTEIN"/>
    <property type="match status" value="1"/>
</dbReference>
<dbReference type="Pfam" id="PF23756">
    <property type="entry name" value="Beta-prop_HPS5"/>
    <property type="match status" value="2"/>
</dbReference>
<dbReference type="Pfam" id="PF23757">
    <property type="entry name" value="TPR_HPS5_insect"/>
    <property type="match status" value="1"/>
</dbReference>
<dbReference type="PIRSF" id="PIRSF037475">
    <property type="entry name" value="BLOC-2_complex_Hps5"/>
    <property type="match status" value="1"/>
</dbReference>
<dbReference type="SUPFAM" id="SSF82171">
    <property type="entry name" value="DPP6 N-terminal domain-like"/>
    <property type="match status" value="1"/>
</dbReference>
<feature type="chain" id="PRO_0000302854" description="BLOC-2 complex member HPS5 homolog">
    <location>
        <begin position="1"/>
        <end position="845"/>
    </location>
</feature>
<feature type="region of interest" description="Disordered" evidence="2">
    <location>
        <begin position="239"/>
        <end position="268"/>
    </location>
</feature>
<sequence length="845" mass="96521">MIMDALRHYGLSQQRTELTSAIQLPLRNTRRIKFTCFDVSEKYIIFGANSGSLYVYDRESVNFLSIIPSQLGTISQVQISSNGKQIAVANMRGAIGVVLDLDGSASKEVLLTELGGGEAAGGVGVVGRSGTTAFVTSFCWGEDDKELYCGDSKGTVSLLQLSMFMGRNILNMTLSPVLLLENHIVQIDRYKELLLVSTLSKCVLCNTQREEFKQIGNRPRDGLYGATFIVPNPEYFNTPTEEDLEDAKSMEGSDDNDNDQRSSPSGVKIAQDQVRIFCSRPGSRLWEADIDGNVLRTHQFRHRSTDREANGPCNEIIAFKLLQKVLGRLILVHDDREIFLIDPIASQVVLWINNVGDISRVRLVGEDIYVFGNDQTMMKLRLDVEQKEVPKRLPKKINGKKSSPFKENGVYILDHLFNNNGLKEGTLQTESTIKEALASVVRGKYGRNIKQMFLGYDQMGPERPKTLNISKVYNSEESYNNMVQVLPTDESSYAEDDCSEDVVPKRNPPKKMFSMSLLSDYQLSEDDKTVRNLYLVYRSSIISNLNFADRYAKIFDAYDTESIVSLLHKLEIVMDENNEEQSRLKCIKIYFDYLKVELIWEIDVESRAFIKQCFIEYNKMLLHEELCELEKCESCGHYLRTNINCHYPEIGTTLIQYYWSRKDYAHCFELVQQIPFLWHTITKFYIQDNREDKAIQCIWNVGDPGLLERAACEMFTMDHWRQLLDLMLTCYNSNSLMCLNCDKLCTLADPGRNPMWREQQNQAQSPVVNPKDNNHINNNNIGITTRGSTNVNRFYSWNYILNTAIDQKCVDGKSMLKLLRGYDEYIPKGAISTSFYLKCLLNVSD</sequence>
<protein>
    <recommendedName>
        <fullName evidence="3">BLOC-2 complex member HPS5 homolog</fullName>
    </recommendedName>
    <alternativeName>
        <fullName>Hermansky-Pudlak syndrome 5 protein homolog</fullName>
    </alternativeName>
    <alternativeName>
        <fullName>Protein pink</fullName>
    </alternativeName>
</protein>
<reference evidence="4" key="1">
    <citation type="journal article" date="2007" name="Science">
        <title>Genome sequence of Aedes aegypti, a major arbovirus vector.</title>
        <authorList>
            <person name="Nene V."/>
            <person name="Wortman J.R."/>
            <person name="Lawson D."/>
            <person name="Haas B.J."/>
            <person name="Kodira C.D."/>
            <person name="Tu Z.J."/>
            <person name="Loftus B.J."/>
            <person name="Xi Z."/>
            <person name="Megy K."/>
            <person name="Grabherr M."/>
            <person name="Ren Q."/>
            <person name="Zdobnov E.M."/>
            <person name="Lobo N.F."/>
            <person name="Campbell K.S."/>
            <person name="Brown S.E."/>
            <person name="Bonaldo M.F."/>
            <person name="Zhu J."/>
            <person name="Sinkins S.P."/>
            <person name="Hogenkamp D.G."/>
            <person name="Amedeo P."/>
            <person name="Arensburger P."/>
            <person name="Atkinson P.W."/>
            <person name="Bidwell S.L."/>
            <person name="Biedler J."/>
            <person name="Birney E."/>
            <person name="Bruggner R.V."/>
            <person name="Costas J."/>
            <person name="Coy M.R."/>
            <person name="Crabtree J."/>
            <person name="Crawford M."/>
            <person name="DeBruyn B."/>
            <person name="DeCaprio D."/>
            <person name="Eiglmeier K."/>
            <person name="Eisenstadt E."/>
            <person name="El-Dorry H."/>
            <person name="Gelbart W.M."/>
            <person name="Gomes S.L."/>
            <person name="Hammond M."/>
            <person name="Hannick L.I."/>
            <person name="Hogan J.R."/>
            <person name="Holmes M.H."/>
            <person name="Jaffe D."/>
            <person name="Johnston S.J."/>
            <person name="Kennedy R.C."/>
            <person name="Koo H."/>
            <person name="Kravitz S."/>
            <person name="Kriventseva E.V."/>
            <person name="Kulp D."/>
            <person name="Labutti K."/>
            <person name="Lee E."/>
            <person name="Li S."/>
            <person name="Lovin D.D."/>
            <person name="Mao C."/>
            <person name="Mauceli E."/>
            <person name="Menck C.F."/>
            <person name="Miller J.R."/>
            <person name="Montgomery P."/>
            <person name="Mori A."/>
            <person name="Nascimento A.L."/>
            <person name="Naveira H.F."/>
            <person name="Nusbaum C."/>
            <person name="O'Leary S.B."/>
            <person name="Orvis J."/>
            <person name="Pertea M."/>
            <person name="Quesneville H."/>
            <person name="Reidenbach K.R."/>
            <person name="Rogers Y.-H.C."/>
            <person name="Roth C.W."/>
            <person name="Schneider J.R."/>
            <person name="Schatz M."/>
            <person name="Shumway M."/>
            <person name="Stanke M."/>
            <person name="Stinson E.O."/>
            <person name="Tubio J.M.C."/>
            <person name="Vanzee J.P."/>
            <person name="Verjovski-Almeida S."/>
            <person name="Werner D."/>
            <person name="White O.R."/>
            <person name="Wyder S."/>
            <person name="Zeng Q."/>
            <person name="Zhao Q."/>
            <person name="Zhao Y."/>
            <person name="Hill C.A."/>
            <person name="Raikhel A.S."/>
            <person name="Soares M.B."/>
            <person name="Knudson D.L."/>
            <person name="Lee N.H."/>
            <person name="Galagan J."/>
            <person name="Salzberg S.L."/>
            <person name="Paulsen I.T."/>
            <person name="Dimopoulos G."/>
            <person name="Collins F.H."/>
            <person name="Bruce B."/>
            <person name="Fraser-Liggett C.M."/>
            <person name="Severson D.W."/>
        </authorList>
    </citation>
    <scope>NUCLEOTIDE SEQUENCE [LARGE SCALE GENOMIC DNA]</scope>
    <source>
        <strain>LVPib12</strain>
    </source>
</reference>
<name>HPS5_AEDAE</name>
<evidence type="ECO:0000250" key="1">
    <source>
        <dbReference type="UniProtKB" id="Q9VHN9"/>
    </source>
</evidence>
<evidence type="ECO:0000256" key="2">
    <source>
        <dbReference type="SAM" id="MobiDB-lite"/>
    </source>
</evidence>
<evidence type="ECO:0000305" key="3"/>
<evidence type="ECO:0000312" key="4">
    <source>
        <dbReference type="EMBL" id="EAT42313.1"/>
    </source>
</evidence>
<comment type="function">
    <text evidence="1">Has a role in the biogenesis of eye pigment granules. Eye pigment granules are specialized forms of late endosomes or lysosomes. Biogenesis of pigment granules in the eye requires molecular components required for protein delivery to lysosomes (By similarity).</text>
</comment>
<comment type="similarity">
    <text evidence="3">Belongs to the HPS5 family.</text>
</comment>
<gene>
    <name evidence="1" type="primary">p</name>
    <name type="ORF">AAEL006142</name>
</gene>
<organism>
    <name type="scientific">Aedes aegypti</name>
    <name type="common">Yellowfever mosquito</name>
    <name type="synonym">Culex aegypti</name>
    <dbReference type="NCBI Taxonomy" id="7159"/>
    <lineage>
        <taxon>Eukaryota</taxon>
        <taxon>Metazoa</taxon>
        <taxon>Ecdysozoa</taxon>
        <taxon>Arthropoda</taxon>
        <taxon>Hexapoda</taxon>
        <taxon>Insecta</taxon>
        <taxon>Pterygota</taxon>
        <taxon>Neoptera</taxon>
        <taxon>Endopterygota</taxon>
        <taxon>Diptera</taxon>
        <taxon>Nematocera</taxon>
        <taxon>Culicoidea</taxon>
        <taxon>Culicidae</taxon>
        <taxon>Culicinae</taxon>
        <taxon>Aedini</taxon>
        <taxon>Aedes</taxon>
        <taxon>Stegomyia</taxon>
    </lineage>
</organism>
<proteinExistence type="inferred from homology"/>